<sequence>MSTRTKALNAYRHGLRATRIAFRNDAEVLLAARAKMRSGMLCPPDPKLTTEDQIQHLEDVAVFLRRNLVQGKKVDGSSTKEPRYHLNIHKDTELGDNETIADPTARVKTNLKARPFKCSDKKQ</sequence>
<organism>
    <name type="scientific">Saccharomyces cerevisiae (strain RM11-1a)</name>
    <name type="common">Baker's yeast</name>
    <dbReference type="NCBI Taxonomy" id="285006"/>
    <lineage>
        <taxon>Eukaryota</taxon>
        <taxon>Fungi</taxon>
        <taxon>Dikarya</taxon>
        <taxon>Ascomycota</taxon>
        <taxon>Saccharomycotina</taxon>
        <taxon>Saccharomycetes</taxon>
        <taxon>Saccharomycetales</taxon>
        <taxon>Saccharomycetaceae</taxon>
        <taxon>Saccharomyces</taxon>
    </lineage>
</organism>
<dbReference type="EMBL" id="CH408043">
    <property type="protein sequence ID" value="EDV07853.1"/>
    <property type="molecule type" value="Genomic_DNA"/>
</dbReference>
<dbReference type="SMR" id="B3LFH4"/>
<dbReference type="HOGENOM" id="CLU_147114_2_2_1"/>
<dbReference type="OrthoDB" id="24544at4893"/>
<dbReference type="Proteomes" id="UP000008335">
    <property type="component" value="Unassembled WGS sequence"/>
</dbReference>
<dbReference type="GO" id="GO:0005759">
    <property type="term" value="C:mitochondrial matrix"/>
    <property type="evidence" value="ECO:0007669"/>
    <property type="project" value="UniProtKB-SubCell"/>
</dbReference>
<dbReference type="GO" id="GO:0044183">
    <property type="term" value="F:protein folding chaperone"/>
    <property type="evidence" value="ECO:0007669"/>
    <property type="project" value="TreeGrafter"/>
</dbReference>
<dbReference type="GO" id="GO:0034551">
    <property type="term" value="P:mitochondrial respiratory chain complex III assembly"/>
    <property type="evidence" value="ECO:0007669"/>
    <property type="project" value="InterPro"/>
</dbReference>
<dbReference type="CDD" id="cd20267">
    <property type="entry name" value="Complex1_LYR_LYRM7"/>
    <property type="match status" value="1"/>
</dbReference>
<dbReference type="InterPro" id="IPR045298">
    <property type="entry name" value="Complex1_LYR_LYRM7"/>
</dbReference>
<dbReference type="InterPro" id="IPR050435">
    <property type="entry name" value="MZM1/LYRM7"/>
</dbReference>
<dbReference type="PANTHER" id="PTHR46749">
    <property type="entry name" value="COMPLEX III ASSEMBLY FACTOR LYRM7"/>
    <property type="match status" value="1"/>
</dbReference>
<dbReference type="PANTHER" id="PTHR46749:SF1">
    <property type="entry name" value="COMPLEX III ASSEMBLY FACTOR LYRM7"/>
    <property type="match status" value="1"/>
</dbReference>
<feature type="transit peptide" description="Mitochondrion" evidence="2">
    <location>
        <begin position="1"/>
        <end position="24"/>
    </location>
</feature>
<feature type="chain" id="PRO_0000405513" description="Mitochondrial zinc maintenance protein 1, mitochondrial">
    <location>
        <begin position="25"/>
        <end position="123"/>
    </location>
</feature>
<keyword id="KW-0143">Chaperone</keyword>
<keyword id="KW-0496">Mitochondrion</keyword>
<keyword id="KW-0809">Transit peptide</keyword>
<gene>
    <name type="primary">MZM1</name>
    <name type="synonym">AIM8</name>
    <name type="synonym">FMP36</name>
    <name type="ORF">SCRG_00049</name>
</gene>
<evidence type="ECO:0000250" key="1"/>
<evidence type="ECO:0000255" key="2"/>
<evidence type="ECO:0000305" key="3"/>
<proteinExistence type="inferred from homology"/>
<accession>B3LFH4</accession>
<protein>
    <recommendedName>
        <fullName>Mitochondrial zinc maintenance protein 1, mitochondrial</fullName>
    </recommendedName>
    <alternativeName>
        <fullName>Altered inheritance of mitochondria protein 8</fullName>
    </alternativeName>
    <alternativeName>
        <fullName>Found in mitochondrial proteome protein 36</fullName>
    </alternativeName>
</protein>
<comment type="function">
    <text evidence="1">Assembly factor required for Rieske Fe-S protein RIP1 incorporation into the cytochrome b-c1 (CIII) complex. Functions as a chaperone, binding to this subunit within the mitochondrial matrix and stabilizing it prior to its translocation and insertion into the late CIII dimeric intermediate within the mitochondrial inner membrane. Modulates the mitochondrial matrix zinc pool (By similarity).</text>
</comment>
<comment type="subunit">
    <text evidence="1">Interacts with RIP1.</text>
</comment>
<comment type="subcellular location">
    <subcellularLocation>
        <location evidence="1">Mitochondrion matrix</location>
    </subcellularLocation>
</comment>
<comment type="similarity">
    <text evidence="3">Belongs to the complex I LYR family. MZM1 subfamily.</text>
</comment>
<reference key="1">
    <citation type="submission" date="2005-03" db="EMBL/GenBank/DDBJ databases">
        <title>Annotation of the Saccharomyces cerevisiae RM11-1a genome.</title>
        <authorList>
            <consortium name="The Broad Institute Genome Sequencing Platform"/>
            <person name="Birren B.W."/>
            <person name="Lander E.S."/>
            <person name="Galagan J.E."/>
            <person name="Nusbaum C."/>
            <person name="Devon K."/>
            <person name="Cuomo C."/>
            <person name="Jaffe D.B."/>
            <person name="Butler J."/>
            <person name="Alvarez P."/>
            <person name="Gnerre S."/>
            <person name="Grabherr M."/>
            <person name="Kleber M."/>
            <person name="Mauceli E.W."/>
            <person name="Brockman W."/>
            <person name="MacCallum I.A."/>
            <person name="Rounsley S."/>
            <person name="Young S.K."/>
            <person name="LaButti K."/>
            <person name="Pushparaj V."/>
            <person name="DeCaprio D."/>
            <person name="Crawford M."/>
            <person name="Koehrsen M."/>
            <person name="Engels R."/>
            <person name="Montgomery P."/>
            <person name="Pearson M."/>
            <person name="Howarth C."/>
            <person name="Larson L."/>
            <person name="Luoma S."/>
            <person name="White J."/>
            <person name="O'Leary S."/>
            <person name="Kodira C.D."/>
            <person name="Zeng Q."/>
            <person name="Yandava C."/>
            <person name="Alvarado L."/>
            <person name="Pratt S."/>
            <person name="Kruglyak L."/>
        </authorList>
    </citation>
    <scope>NUCLEOTIDE SEQUENCE [LARGE SCALE GENOMIC DNA]</scope>
    <source>
        <strain>RM11-1a</strain>
    </source>
</reference>
<name>MZM1_YEAS1</name>